<proteinExistence type="inferred from homology"/>
<gene>
    <name type="primary">isdC</name>
    <name type="synonym">sirD</name>
    <name type="ordered locus">SAHV_1122</name>
</gene>
<reference key="1">
    <citation type="journal article" date="2008" name="Antimicrob. Agents Chemother.">
        <title>Mutated response regulator graR is responsible for phenotypic conversion of Staphylococcus aureus from heterogeneous vancomycin-intermediate resistance to vancomycin-intermediate resistance.</title>
        <authorList>
            <person name="Neoh H.-M."/>
            <person name="Cui L."/>
            <person name="Yuzawa H."/>
            <person name="Takeuchi F."/>
            <person name="Matsuo M."/>
            <person name="Hiramatsu K."/>
        </authorList>
    </citation>
    <scope>NUCLEOTIDE SEQUENCE [LARGE SCALE GENOMIC DNA]</scope>
    <source>
        <strain>Mu3 / ATCC 700698</strain>
    </source>
</reference>
<keyword id="KW-0134">Cell wall</keyword>
<keyword id="KW-0349">Heme</keyword>
<keyword id="KW-0408">Iron</keyword>
<keyword id="KW-0479">Metal-binding</keyword>
<keyword id="KW-0572">Peptidoglycan-anchor</keyword>
<keyword id="KW-0964">Secreted</keyword>
<keyword id="KW-0732">Signal</keyword>
<sequence length="227" mass="24855">MKNILKVFNTTILALIIIIATFSNSANAADSGTLNYEVYKYNTNDTSIANDYFNKPAKYIKKNGKLYVQITVNHSHWITGMSIEGHKENIISKNTAKDERTSEFEVSKLNGKIDGKIDVYIDEKVNGKPFKYDHHYNITYKFNGPTDVAGANAPGKDDKNSASGSDKGSDGTTTGQSESNSSNKDKVENPQTNAGTPAYIYAIPVASLALLIAITLFVRKKSKGNVE</sequence>
<name>ISDC_STAA1</name>
<dbReference type="EMBL" id="AP009324">
    <property type="protein sequence ID" value="BAF78005.1"/>
    <property type="molecule type" value="Genomic_DNA"/>
</dbReference>
<dbReference type="RefSeq" id="WP_000789821.1">
    <property type="nucleotide sequence ID" value="NZ_CTYB01000027.1"/>
</dbReference>
<dbReference type="BMRB" id="A7X149"/>
<dbReference type="SMR" id="A7X149"/>
<dbReference type="KEGG" id="saw:SAHV_1122"/>
<dbReference type="HOGENOM" id="CLU_092243_1_0_9"/>
<dbReference type="GO" id="GO:0005576">
    <property type="term" value="C:extracellular region"/>
    <property type="evidence" value="ECO:0007669"/>
    <property type="project" value="UniProtKB-KW"/>
</dbReference>
<dbReference type="GO" id="GO:0009274">
    <property type="term" value="C:peptidoglycan-based cell wall"/>
    <property type="evidence" value="ECO:0007669"/>
    <property type="project" value="InterPro"/>
</dbReference>
<dbReference type="GO" id="GO:0030492">
    <property type="term" value="F:hemoglobin binding"/>
    <property type="evidence" value="ECO:0007669"/>
    <property type="project" value="InterPro"/>
</dbReference>
<dbReference type="GO" id="GO:0046872">
    <property type="term" value="F:metal ion binding"/>
    <property type="evidence" value="ECO:0007669"/>
    <property type="project" value="UniProtKB-KW"/>
</dbReference>
<dbReference type="GO" id="GO:0015886">
    <property type="term" value="P:heme transport"/>
    <property type="evidence" value="ECO:0007669"/>
    <property type="project" value="InterPro"/>
</dbReference>
<dbReference type="CDD" id="cd06920">
    <property type="entry name" value="NEAT"/>
    <property type="match status" value="1"/>
</dbReference>
<dbReference type="Gene3D" id="2.60.40.1850">
    <property type="match status" value="1"/>
</dbReference>
<dbReference type="InterPro" id="IPR019909">
    <property type="entry name" value="Haem_uptake_protein_IsdC"/>
</dbReference>
<dbReference type="InterPro" id="IPR050436">
    <property type="entry name" value="IsdA"/>
</dbReference>
<dbReference type="InterPro" id="IPR006635">
    <property type="entry name" value="NEAT_dom"/>
</dbReference>
<dbReference type="InterPro" id="IPR037250">
    <property type="entry name" value="NEAT_dom_sf"/>
</dbReference>
<dbReference type="InterPro" id="IPR017505">
    <property type="entry name" value="Sortase_SrtB_sig_NPQTN"/>
</dbReference>
<dbReference type="NCBIfam" id="TIGR03656">
    <property type="entry name" value="IsdC"/>
    <property type="match status" value="1"/>
</dbReference>
<dbReference type="NCBIfam" id="TIGR03068">
    <property type="entry name" value="srtB_sig_NPQTN"/>
    <property type="match status" value="1"/>
</dbReference>
<dbReference type="PANTHER" id="PTHR37824">
    <property type="entry name" value="IRON-REGULATED SURFACE DETERMINANT PROTEIN C"/>
    <property type="match status" value="1"/>
</dbReference>
<dbReference type="PANTHER" id="PTHR37824:SF1">
    <property type="entry name" value="IRON-REGULATED SURFACE DETERMINANT PROTEIN C"/>
    <property type="match status" value="1"/>
</dbReference>
<dbReference type="Pfam" id="PF05031">
    <property type="entry name" value="NEAT"/>
    <property type="match status" value="1"/>
</dbReference>
<dbReference type="SMART" id="SM00725">
    <property type="entry name" value="NEAT"/>
    <property type="match status" value="1"/>
</dbReference>
<dbReference type="SUPFAM" id="SSF158911">
    <property type="entry name" value="NEAT domain-like"/>
    <property type="match status" value="1"/>
</dbReference>
<dbReference type="PROSITE" id="PS50978">
    <property type="entry name" value="NEAT"/>
    <property type="match status" value="1"/>
</dbReference>
<accession>A7X149</accession>
<feature type="signal peptide" evidence="3">
    <location>
        <begin position="1"/>
        <end position="28"/>
    </location>
</feature>
<feature type="chain" id="PRO_0000333248" description="Iron-regulated surface determinant protein C">
    <location>
        <begin position="29"/>
        <end position="192"/>
    </location>
</feature>
<feature type="propeptide" id="PRO_0000333249" description="Removed by sortase B" evidence="2">
    <location>
        <begin position="193"/>
        <end position="227"/>
    </location>
</feature>
<feature type="domain" description="NEAT" evidence="4">
    <location>
        <begin position="29"/>
        <end position="150"/>
    </location>
</feature>
<feature type="region of interest" description="Disordered" evidence="5">
    <location>
        <begin position="149"/>
        <end position="191"/>
    </location>
</feature>
<feature type="short sequence motif" description="NPQTN sorting signal" evidence="2">
    <location>
        <begin position="189"/>
        <end position="193"/>
    </location>
</feature>
<feature type="compositionally biased region" description="Low complexity" evidence="5">
    <location>
        <begin position="161"/>
        <end position="175"/>
    </location>
</feature>
<feature type="binding site" evidence="2">
    <location>
        <position position="47"/>
    </location>
    <ligand>
        <name>heme</name>
        <dbReference type="ChEBI" id="CHEBI:30413"/>
    </ligand>
</feature>
<feature type="binding site" evidence="2">
    <location>
        <position position="48"/>
    </location>
    <ligand>
        <name>heme</name>
        <dbReference type="ChEBI" id="CHEBI:30413"/>
    </ligand>
</feature>
<feature type="binding site" description="axial binding residue" evidence="1">
    <location>
        <position position="132"/>
    </location>
    <ligand>
        <name>heme</name>
        <dbReference type="ChEBI" id="CHEBI:30413"/>
    </ligand>
    <ligandPart>
        <name>Fe</name>
        <dbReference type="ChEBI" id="CHEBI:18248"/>
    </ligandPart>
</feature>
<feature type="binding site" evidence="2">
    <location>
        <position position="136"/>
    </location>
    <ligand>
        <name>heme</name>
        <dbReference type="ChEBI" id="CHEBI:30413"/>
    </ligand>
</feature>
<feature type="modified residue" description="Pentaglycyl murein peptidoglycan amidated threonine" evidence="2">
    <location>
        <position position="192"/>
    </location>
</feature>
<comment type="function">
    <text evidence="1">Involved in heme (porphyrin) scavenging. Binds hemoglobin and almost exclusively free-base protoporphyrin IX. Probably has a role as the central conduit of the isd heme uptake system, i.e. mediates the transfer of the iron-containing nutrient from IsdABH to the membrane translocation system IsdDEF. Hemin-free IsdC (apo-IsdC) acquires hemin from hemin-containing IsdA (holo-IsdA) probably through the activated holo-IsdA-apo-IsdC complex and due to the higher affinity of apo-IsdC for the cofactor. The reaction is reversible (By similarity).</text>
</comment>
<comment type="subunit">
    <text evidence="1">Monomer. Interacts with IsdA (By similarity).</text>
</comment>
<comment type="subcellular location">
    <subcellularLocation>
        <location evidence="1">Secreted</location>
        <location evidence="1">Cell wall</location>
        <topology evidence="1">Peptidoglycan-anchor</topology>
    </subcellularLocation>
    <text evidence="2">Anchored to the cell wall by sortase B (By similarity).</text>
</comment>
<comment type="induction">
    <text evidence="1">Repressed by fur in the presence of iron.</text>
</comment>
<comment type="domain">
    <text evidence="1">The NEAT domain binds Fe(3+) heme iron. Reduction of the high-spin Fe(3+) heme iron to high-spin Fe(2+) results in loss of the heme from the binding site of the protein due to the absence of a proximal histidine (By similarity).</text>
</comment>
<comment type="similarity">
    <text evidence="6">Belongs to the IsdC family.</text>
</comment>
<organism>
    <name type="scientific">Staphylococcus aureus (strain Mu3 / ATCC 700698)</name>
    <dbReference type="NCBI Taxonomy" id="418127"/>
    <lineage>
        <taxon>Bacteria</taxon>
        <taxon>Bacillati</taxon>
        <taxon>Bacillota</taxon>
        <taxon>Bacilli</taxon>
        <taxon>Bacillales</taxon>
        <taxon>Staphylococcaceae</taxon>
        <taxon>Staphylococcus</taxon>
    </lineage>
</organism>
<protein>
    <recommendedName>
        <fullName>Iron-regulated surface determinant protein C</fullName>
    </recommendedName>
    <alternativeName>
        <fullName>Staphylococcal iron-regulated protein D</fullName>
    </alternativeName>
</protein>
<evidence type="ECO:0000250" key="1"/>
<evidence type="ECO:0000250" key="2">
    <source>
        <dbReference type="UniProtKB" id="Q8KQR1"/>
    </source>
</evidence>
<evidence type="ECO:0000255" key="3"/>
<evidence type="ECO:0000255" key="4">
    <source>
        <dbReference type="PROSITE-ProRule" id="PRU00337"/>
    </source>
</evidence>
<evidence type="ECO:0000256" key="5">
    <source>
        <dbReference type="SAM" id="MobiDB-lite"/>
    </source>
</evidence>
<evidence type="ECO:0000305" key="6"/>